<name>ARGC_MORAB</name>
<accession>Q9K4Z1</accession>
<evidence type="ECO:0000255" key="1">
    <source>
        <dbReference type="HAMAP-Rule" id="MF_00150"/>
    </source>
</evidence>
<proteinExistence type="inferred from homology"/>
<keyword id="KW-0028">Amino-acid biosynthesis</keyword>
<keyword id="KW-0055">Arginine biosynthesis</keyword>
<keyword id="KW-0963">Cytoplasm</keyword>
<keyword id="KW-0521">NADP</keyword>
<keyword id="KW-0560">Oxidoreductase</keyword>
<organism>
    <name type="scientific">Moritella abyssi</name>
    <dbReference type="NCBI Taxonomy" id="111292"/>
    <lineage>
        <taxon>Bacteria</taxon>
        <taxon>Pseudomonadati</taxon>
        <taxon>Pseudomonadota</taxon>
        <taxon>Gammaproteobacteria</taxon>
        <taxon>Alteromonadales</taxon>
        <taxon>Moritellaceae</taxon>
        <taxon>Moritella</taxon>
    </lineage>
</organism>
<dbReference type="EC" id="1.2.1.38" evidence="1"/>
<dbReference type="EMBL" id="AJ252021">
    <property type="protein sequence ID" value="CAB95020.1"/>
    <property type="molecule type" value="Genomic_DNA"/>
</dbReference>
<dbReference type="SMR" id="Q9K4Z1"/>
<dbReference type="UniPathway" id="UPA00068">
    <property type="reaction ID" value="UER00108"/>
</dbReference>
<dbReference type="GO" id="GO:0005737">
    <property type="term" value="C:cytoplasm"/>
    <property type="evidence" value="ECO:0007669"/>
    <property type="project" value="UniProtKB-SubCell"/>
</dbReference>
<dbReference type="GO" id="GO:0003942">
    <property type="term" value="F:N-acetyl-gamma-glutamyl-phosphate reductase activity"/>
    <property type="evidence" value="ECO:0007669"/>
    <property type="project" value="UniProtKB-UniRule"/>
</dbReference>
<dbReference type="GO" id="GO:0051287">
    <property type="term" value="F:NAD binding"/>
    <property type="evidence" value="ECO:0007669"/>
    <property type="project" value="InterPro"/>
</dbReference>
<dbReference type="GO" id="GO:0070401">
    <property type="term" value="F:NADP+ binding"/>
    <property type="evidence" value="ECO:0007669"/>
    <property type="project" value="InterPro"/>
</dbReference>
<dbReference type="GO" id="GO:0006526">
    <property type="term" value="P:L-arginine biosynthetic process"/>
    <property type="evidence" value="ECO:0007669"/>
    <property type="project" value="UniProtKB-UniRule"/>
</dbReference>
<dbReference type="CDD" id="cd23934">
    <property type="entry name" value="AGPR_1_C"/>
    <property type="match status" value="1"/>
</dbReference>
<dbReference type="CDD" id="cd17895">
    <property type="entry name" value="AGPR_1_N"/>
    <property type="match status" value="1"/>
</dbReference>
<dbReference type="FunFam" id="3.30.360.10:FF:000014">
    <property type="entry name" value="N-acetyl-gamma-glutamyl-phosphate reductase"/>
    <property type="match status" value="1"/>
</dbReference>
<dbReference type="Gene3D" id="3.30.360.10">
    <property type="entry name" value="Dihydrodipicolinate Reductase, domain 2"/>
    <property type="match status" value="1"/>
</dbReference>
<dbReference type="Gene3D" id="3.40.50.720">
    <property type="entry name" value="NAD(P)-binding Rossmann-like Domain"/>
    <property type="match status" value="1"/>
</dbReference>
<dbReference type="HAMAP" id="MF_00150">
    <property type="entry name" value="ArgC_type1"/>
    <property type="match status" value="1"/>
</dbReference>
<dbReference type="InterPro" id="IPR023013">
    <property type="entry name" value="AGPR_AS"/>
</dbReference>
<dbReference type="InterPro" id="IPR000706">
    <property type="entry name" value="AGPR_type-1"/>
</dbReference>
<dbReference type="InterPro" id="IPR036291">
    <property type="entry name" value="NAD(P)-bd_dom_sf"/>
</dbReference>
<dbReference type="InterPro" id="IPR050085">
    <property type="entry name" value="NAGSA_dehydrogenase"/>
</dbReference>
<dbReference type="InterPro" id="IPR000534">
    <property type="entry name" value="Semialdehyde_DH_NAD-bd"/>
</dbReference>
<dbReference type="NCBIfam" id="TIGR01850">
    <property type="entry name" value="argC"/>
    <property type="match status" value="1"/>
</dbReference>
<dbReference type="PANTHER" id="PTHR32338:SF10">
    <property type="entry name" value="N-ACETYL-GAMMA-GLUTAMYL-PHOSPHATE REDUCTASE, CHLOROPLASTIC-RELATED"/>
    <property type="match status" value="1"/>
</dbReference>
<dbReference type="PANTHER" id="PTHR32338">
    <property type="entry name" value="N-ACETYL-GAMMA-GLUTAMYL-PHOSPHATE REDUCTASE, CHLOROPLASTIC-RELATED-RELATED"/>
    <property type="match status" value="1"/>
</dbReference>
<dbReference type="Pfam" id="PF01118">
    <property type="entry name" value="Semialdhyde_dh"/>
    <property type="match status" value="1"/>
</dbReference>
<dbReference type="Pfam" id="PF22698">
    <property type="entry name" value="Semialdhyde_dhC_1"/>
    <property type="match status" value="1"/>
</dbReference>
<dbReference type="SMART" id="SM00859">
    <property type="entry name" value="Semialdhyde_dh"/>
    <property type="match status" value="1"/>
</dbReference>
<dbReference type="SUPFAM" id="SSF55347">
    <property type="entry name" value="Glyceraldehyde-3-phosphate dehydrogenase-like, C-terminal domain"/>
    <property type="match status" value="1"/>
</dbReference>
<dbReference type="SUPFAM" id="SSF51735">
    <property type="entry name" value="NAD(P)-binding Rossmann-fold domains"/>
    <property type="match status" value="1"/>
</dbReference>
<dbReference type="PROSITE" id="PS01224">
    <property type="entry name" value="ARGC"/>
    <property type="match status" value="1"/>
</dbReference>
<sequence>MLKTILVGATGYTGAELAHYITKHPELELAGLYVSEHSLDAGKPFSSLYGHLLGVVDQTIQPLALSNIKHICDDVDIVVLATAHEVSHDIAAEFLAQGTVVFDLSGAFRVNDPAFYEKYYGFKHNFDKELKSAVYGLAEWASADIAEANLIAVPGCYPTASLSALKPLAQHGLIAAEQKPIINAVSGVSGAGRKASLASAFCEVSHAPYGVFNHRHQPEISTHLGHEVIFTPHLGSFKRGILATINVKLVAGVTPEQVTAAYQEAYQDQPMVRLLPRRTPSIKAVEKTAYYDLAWQQQGQDLIVVSAIDNLLKGAAAQAMQCINIRFGFAMTTSLV</sequence>
<gene>
    <name evidence="1" type="primary">argC</name>
</gene>
<comment type="function">
    <text evidence="1">Catalyzes the NADPH-dependent reduction of N-acetyl-5-glutamyl phosphate to yield N-acetyl-L-glutamate 5-semialdehyde.</text>
</comment>
<comment type="catalytic activity">
    <reaction evidence="1">
        <text>N-acetyl-L-glutamate 5-semialdehyde + phosphate + NADP(+) = N-acetyl-L-glutamyl 5-phosphate + NADPH + H(+)</text>
        <dbReference type="Rhea" id="RHEA:21588"/>
        <dbReference type="ChEBI" id="CHEBI:15378"/>
        <dbReference type="ChEBI" id="CHEBI:29123"/>
        <dbReference type="ChEBI" id="CHEBI:43474"/>
        <dbReference type="ChEBI" id="CHEBI:57783"/>
        <dbReference type="ChEBI" id="CHEBI:57936"/>
        <dbReference type="ChEBI" id="CHEBI:58349"/>
        <dbReference type="EC" id="1.2.1.38"/>
    </reaction>
</comment>
<comment type="pathway">
    <text evidence="1">Amino-acid biosynthesis; L-arginine biosynthesis; N(2)-acetyl-L-ornithine from L-glutamate: step 3/4.</text>
</comment>
<comment type="subcellular location">
    <subcellularLocation>
        <location evidence="1">Cytoplasm</location>
    </subcellularLocation>
</comment>
<comment type="similarity">
    <text evidence="1">Belongs to the NAGSA dehydrogenase family. Type 1 subfamily.</text>
</comment>
<protein>
    <recommendedName>
        <fullName evidence="1">N-acetyl-gamma-glutamyl-phosphate reductase</fullName>
        <shortName evidence="1">AGPR</shortName>
        <ecNumber evidence="1">1.2.1.38</ecNumber>
    </recommendedName>
    <alternativeName>
        <fullName evidence="1">N-acetyl-glutamate semialdehyde dehydrogenase</fullName>
        <shortName evidence="1">NAGSA dehydrogenase</shortName>
    </alternativeName>
</protein>
<feature type="chain" id="PRO_0000112420" description="N-acetyl-gamma-glutamyl-phosphate reductase">
    <location>
        <begin position="1"/>
        <end position="336"/>
    </location>
</feature>
<feature type="active site" evidence="1">
    <location>
        <position position="156"/>
    </location>
</feature>
<reference key="1">
    <citation type="journal article" date="2000" name="J. Bacteriol.">
        <title>Evolution of arginine biosynthesis in the bacterial domain: novel gene-enzyme relationships from psychrophilic Moritella strains (Vibrionaceae) and evolutionary significance of N-alpha-acetyl ornithinase.</title>
        <authorList>
            <person name="Xu Y."/>
            <person name="Liang Z."/>
            <person name="Legrain C."/>
            <person name="Ruger H.J."/>
            <person name="Glansdorff N."/>
        </authorList>
    </citation>
    <scope>NUCLEOTIDE SEQUENCE [GENOMIC DNA]</scope>
    <source>
        <strain>JCM 11436 / CIP 108121 / LMG 21258 / 2693</strain>
    </source>
</reference>